<feature type="chain" id="PRO_1000115134" description="Large ribosomal subunit protein bL33">
    <location>
        <begin position="1"/>
        <end position="55"/>
    </location>
</feature>
<feature type="region of interest" description="Disordered" evidence="2">
    <location>
        <begin position="1"/>
        <end position="27"/>
    </location>
</feature>
<feature type="compositionally biased region" description="Basic and acidic residues" evidence="2">
    <location>
        <begin position="1"/>
        <end position="11"/>
    </location>
</feature>
<feature type="compositionally biased region" description="Polar residues" evidence="2">
    <location>
        <begin position="14"/>
        <end position="24"/>
    </location>
</feature>
<proteinExistence type="inferred from homology"/>
<accession>A4G7W1</accession>
<sequence>MAKSGRDKIKLESTAGTGHFYTTTKNKRTTPEKMSIIKFDPKVRKHVEYKETKIK</sequence>
<keyword id="KW-1185">Reference proteome</keyword>
<keyword id="KW-0687">Ribonucleoprotein</keyword>
<keyword id="KW-0689">Ribosomal protein</keyword>
<reference key="1">
    <citation type="journal article" date="2007" name="PLoS Genet.">
        <title>A tale of two oxidation states: bacterial colonization of arsenic-rich environments.</title>
        <authorList>
            <person name="Muller D."/>
            <person name="Medigue C."/>
            <person name="Koechler S."/>
            <person name="Barbe V."/>
            <person name="Barakat M."/>
            <person name="Talla E."/>
            <person name="Bonnefoy V."/>
            <person name="Krin E."/>
            <person name="Arsene-Ploetze F."/>
            <person name="Carapito C."/>
            <person name="Chandler M."/>
            <person name="Cournoyer B."/>
            <person name="Cruveiller S."/>
            <person name="Dossat C."/>
            <person name="Duval S."/>
            <person name="Heymann M."/>
            <person name="Leize E."/>
            <person name="Lieutaud A."/>
            <person name="Lievremont D."/>
            <person name="Makita Y."/>
            <person name="Mangenot S."/>
            <person name="Nitschke W."/>
            <person name="Ortet P."/>
            <person name="Perdrial N."/>
            <person name="Schoepp B."/>
            <person name="Siguier P."/>
            <person name="Simeonova D.D."/>
            <person name="Rouy Z."/>
            <person name="Segurens B."/>
            <person name="Turlin E."/>
            <person name="Vallenet D."/>
            <person name="van Dorsselaer A."/>
            <person name="Weiss S."/>
            <person name="Weissenbach J."/>
            <person name="Lett M.-C."/>
            <person name="Danchin A."/>
            <person name="Bertin P.N."/>
        </authorList>
    </citation>
    <scope>NUCLEOTIDE SEQUENCE [LARGE SCALE GENOMIC DNA]</scope>
    <source>
        <strain>ULPAs1</strain>
    </source>
</reference>
<organism>
    <name type="scientific">Herminiimonas arsenicoxydans</name>
    <dbReference type="NCBI Taxonomy" id="204773"/>
    <lineage>
        <taxon>Bacteria</taxon>
        <taxon>Pseudomonadati</taxon>
        <taxon>Pseudomonadota</taxon>
        <taxon>Betaproteobacteria</taxon>
        <taxon>Burkholderiales</taxon>
        <taxon>Oxalobacteraceae</taxon>
        <taxon>Herminiimonas</taxon>
    </lineage>
</organism>
<name>RL33_HERAR</name>
<comment type="similarity">
    <text evidence="1">Belongs to the bacterial ribosomal protein bL33 family.</text>
</comment>
<gene>
    <name evidence="1" type="primary">rpmG</name>
    <name type="ordered locus">HEAR2470</name>
</gene>
<evidence type="ECO:0000255" key="1">
    <source>
        <dbReference type="HAMAP-Rule" id="MF_00294"/>
    </source>
</evidence>
<evidence type="ECO:0000256" key="2">
    <source>
        <dbReference type="SAM" id="MobiDB-lite"/>
    </source>
</evidence>
<evidence type="ECO:0000305" key="3"/>
<protein>
    <recommendedName>
        <fullName evidence="1">Large ribosomal subunit protein bL33</fullName>
    </recommendedName>
    <alternativeName>
        <fullName evidence="3">50S ribosomal protein L33</fullName>
    </alternativeName>
</protein>
<dbReference type="EMBL" id="CU207211">
    <property type="protein sequence ID" value="CAL62598.1"/>
    <property type="molecule type" value="Genomic_DNA"/>
</dbReference>
<dbReference type="SMR" id="A4G7W1"/>
<dbReference type="STRING" id="204773.HEAR2470"/>
<dbReference type="KEGG" id="har:HEAR2470"/>
<dbReference type="eggNOG" id="COG0267">
    <property type="taxonomic scope" value="Bacteria"/>
</dbReference>
<dbReference type="HOGENOM" id="CLU_190949_1_1_4"/>
<dbReference type="OrthoDB" id="21586at2"/>
<dbReference type="Proteomes" id="UP000006697">
    <property type="component" value="Chromosome"/>
</dbReference>
<dbReference type="GO" id="GO:0022625">
    <property type="term" value="C:cytosolic large ribosomal subunit"/>
    <property type="evidence" value="ECO:0007669"/>
    <property type="project" value="TreeGrafter"/>
</dbReference>
<dbReference type="GO" id="GO:0003735">
    <property type="term" value="F:structural constituent of ribosome"/>
    <property type="evidence" value="ECO:0007669"/>
    <property type="project" value="InterPro"/>
</dbReference>
<dbReference type="GO" id="GO:0006412">
    <property type="term" value="P:translation"/>
    <property type="evidence" value="ECO:0007669"/>
    <property type="project" value="UniProtKB-UniRule"/>
</dbReference>
<dbReference type="Gene3D" id="2.20.28.120">
    <property type="entry name" value="Ribosomal protein L33"/>
    <property type="match status" value="1"/>
</dbReference>
<dbReference type="HAMAP" id="MF_00294">
    <property type="entry name" value="Ribosomal_bL33"/>
    <property type="match status" value="1"/>
</dbReference>
<dbReference type="InterPro" id="IPR001705">
    <property type="entry name" value="Ribosomal_bL33"/>
</dbReference>
<dbReference type="InterPro" id="IPR018264">
    <property type="entry name" value="Ribosomal_bL33_CS"/>
</dbReference>
<dbReference type="InterPro" id="IPR038584">
    <property type="entry name" value="Ribosomal_bL33_sf"/>
</dbReference>
<dbReference type="InterPro" id="IPR011332">
    <property type="entry name" value="Ribosomal_zn-bd"/>
</dbReference>
<dbReference type="NCBIfam" id="NF001860">
    <property type="entry name" value="PRK00595.1"/>
    <property type="match status" value="1"/>
</dbReference>
<dbReference type="NCBIfam" id="TIGR01023">
    <property type="entry name" value="rpmG_bact"/>
    <property type="match status" value="1"/>
</dbReference>
<dbReference type="PANTHER" id="PTHR15238">
    <property type="entry name" value="54S RIBOSOMAL PROTEIN L39, MITOCHONDRIAL"/>
    <property type="match status" value="1"/>
</dbReference>
<dbReference type="PANTHER" id="PTHR15238:SF1">
    <property type="entry name" value="LARGE RIBOSOMAL SUBUNIT PROTEIN BL33M"/>
    <property type="match status" value="1"/>
</dbReference>
<dbReference type="Pfam" id="PF00471">
    <property type="entry name" value="Ribosomal_L33"/>
    <property type="match status" value="1"/>
</dbReference>
<dbReference type="SUPFAM" id="SSF57829">
    <property type="entry name" value="Zn-binding ribosomal proteins"/>
    <property type="match status" value="1"/>
</dbReference>
<dbReference type="PROSITE" id="PS00582">
    <property type="entry name" value="RIBOSOMAL_L33"/>
    <property type="match status" value="1"/>
</dbReference>